<evidence type="ECO:0000250" key="1"/>
<evidence type="ECO:0000255" key="2">
    <source>
        <dbReference type="PROSITE-ProRule" id="PRU00691"/>
    </source>
</evidence>
<evidence type="ECO:0000305" key="3"/>
<keyword id="KW-1015">Disulfide bond</keyword>
<keyword id="KW-0249">Electron transport</keyword>
<keyword id="KW-0676">Redox-active center</keyword>
<keyword id="KW-0813">Transport</keyword>
<proteinExistence type="inferred from homology"/>
<protein>
    <recommendedName>
        <fullName>Thioredoxin</fullName>
        <shortName>Trx</shortName>
    </recommendedName>
</protein>
<sequence length="105" mass="12065">MVNNVTDISFKNEVLESDLPVIVDFWAEWCGPCKMLIPIIDEISKELQDKVKVLKMNIDENPKTPSEYGVRSIPTIMLFKNGEQKDTKIGLQQKKSLLDWINKSI</sequence>
<feature type="chain" id="PRO_0000272628" description="Thioredoxin">
    <location>
        <begin position="1"/>
        <end position="105"/>
    </location>
</feature>
<feature type="domain" description="Thioredoxin" evidence="2">
    <location>
        <begin position="1"/>
        <end position="105"/>
    </location>
</feature>
<feature type="disulfide bond" description="Redox-active" evidence="2">
    <location>
        <begin position="30"/>
        <end position="33"/>
    </location>
</feature>
<name>THIO_RICTY</name>
<dbReference type="EMBL" id="AE017197">
    <property type="protein sequence ID" value="AAU03492.1"/>
    <property type="molecule type" value="Genomic_DNA"/>
</dbReference>
<dbReference type="RefSeq" id="WP_011190479.1">
    <property type="nucleotide sequence ID" value="NC_006142.1"/>
</dbReference>
<dbReference type="SMR" id="Q68Y00"/>
<dbReference type="KEGG" id="rty:RT0002"/>
<dbReference type="eggNOG" id="COG3118">
    <property type="taxonomic scope" value="Bacteria"/>
</dbReference>
<dbReference type="HOGENOM" id="CLU_090389_10_2_5"/>
<dbReference type="OrthoDB" id="9790390at2"/>
<dbReference type="Proteomes" id="UP000000604">
    <property type="component" value="Chromosome"/>
</dbReference>
<dbReference type="GO" id="GO:0005737">
    <property type="term" value="C:cytoplasm"/>
    <property type="evidence" value="ECO:0007669"/>
    <property type="project" value="TreeGrafter"/>
</dbReference>
<dbReference type="GO" id="GO:0015035">
    <property type="term" value="F:protein-disulfide reductase activity"/>
    <property type="evidence" value="ECO:0007669"/>
    <property type="project" value="InterPro"/>
</dbReference>
<dbReference type="CDD" id="cd02947">
    <property type="entry name" value="TRX_family"/>
    <property type="match status" value="1"/>
</dbReference>
<dbReference type="FunFam" id="3.40.30.10:FF:000001">
    <property type="entry name" value="Thioredoxin"/>
    <property type="match status" value="1"/>
</dbReference>
<dbReference type="Gene3D" id="3.40.30.10">
    <property type="entry name" value="Glutaredoxin"/>
    <property type="match status" value="1"/>
</dbReference>
<dbReference type="InterPro" id="IPR005746">
    <property type="entry name" value="Thioredoxin"/>
</dbReference>
<dbReference type="InterPro" id="IPR036249">
    <property type="entry name" value="Thioredoxin-like_sf"/>
</dbReference>
<dbReference type="InterPro" id="IPR017937">
    <property type="entry name" value="Thioredoxin_CS"/>
</dbReference>
<dbReference type="InterPro" id="IPR013766">
    <property type="entry name" value="Thioredoxin_domain"/>
</dbReference>
<dbReference type="NCBIfam" id="TIGR01068">
    <property type="entry name" value="thioredoxin"/>
    <property type="match status" value="1"/>
</dbReference>
<dbReference type="PANTHER" id="PTHR45663">
    <property type="entry name" value="GEO12009P1"/>
    <property type="match status" value="1"/>
</dbReference>
<dbReference type="PANTHER" id="PTHR45663:SF11">
    <property type="entry name" value="GEO12009P1"/>
    <property type="match status" value="1"/>
</dbReference>
<dbReference type="Pfam" id="PF00085">
    <property type="entry name" value="Thioredoxin"/>
    <property type="match status" value="1"/>
</dbReference>
<dbReference type="PIRSF" id="PIRSF000077">
    <property type="entry name" value="Thioredoxin"/>
    <property type="match status" value="1"/>
</dbReference>
<dbReference type="PRINTS" id="PR00421">
    <property type="entry name" value="THIOREDOXIN"/>
</dbReference>
<dbReference type="SUPFAM" id="SSF52833">
    <property type="entry name" value="Thioredoxin-like"/>
    <property type="match status" value="1"/>
</dbReference>
<dbReference type="PROSITE" id="PS00194">
    <property type="entry name" value="THIOREDOXIN_1"/>
    <property type="match status" value="1"/>
</dbReference>
<dbReference type="PROSITE" id="PS51352">
    <property type="entry name" value="THIOREDOXIN_2"/>
    <property type="match status" value="1"/>
</dbReference>
<comment type="function">
    <text evidence="1">Component of the thioredoxin-thioredoxin reductase system. Participates in various redox reactions through the reversible oxidation of its active center dithiol to a disulfide and catalyzes dithiol-disulfide exchange reactions (By similarity).</text>
</comment>
<comment type="similarity">
    <text evidence="3">Belongs to the thioredoxin family.</text>
</comment>
<reference key="1">
    <citation type="journal article" date="2004" name="J. Bacteriol.">
        <title>Complete genome sequence of Rickettsia typhi and comparison with sequences of other Rickettsiae.</title>
        <authorList>
            <person name="McLeod M.P."/>
            <person name="Qin X."/>
            <person name="Karpathy S.E."/>
            <person name="Gioia J."/>
            <person name="Highlander S.K."/>
            <person name="Fox G.E."/>
            <person name="McNeill T.Z."/>
            <person name="Jiang H."/>
            <person name="Muzny D."/>
            <person name="Jacob L.S."/>
            <person name="Hawes A.C."/>
            <person name="Sodergren E."/>
            <person name="Gill R."/>
            <person name="Hume J."/>
            <person name="Morgan M."/>
            <person name="Fan G."/>
            <person name="Amin A.G."/>
            <person name="Gibbs R.A."/>
            <person name="Hong C."/>
            <person name="Yu X.-J."/>
            <person name="Walker D.H."/>
            <person name="Weinstock G.M."/>
        </authorList>
    </citation>
    <scope>NUCLEOTIDE SEQUENCE [LARGE SCALE GENOMIC DNA]</scope>
    <source>
        <strain>ATCC VR-144 / Wilmington</strain>
    </source>
</reference>
<organism>
    <name type="scientific">Rickettsia typhi (strain ATCC VR-144 / Wilmington)</name>
    <dbReference type="NCBI Taxonomy" id="257363"/>
    <lineage>
        <taxon>Bacteria</taxon>
        <taxon>Pseudomonadati</taxon>
        <taxon>Pseudomonadota</taxon>
        <taxon>Alphaproteobacteria</taxon>
        <taxon>Rickettsiales</taxon>
        <taxon>Rickettsiaceae</taxon>
        <taxon>Rickettsieae</taxon>
        <taxon>Rickettsia</taxon>
        <taxon>typhus group</taxon>
    </lineage>
</organism>
<gene>
    <name type="primary">trxA</name>
    <name type="ordered locus">RT0002</name>
</gene>
<accession>Q68Y00</accession>